<feature type="signal peptide" evidence="2">
    <location>
        <begin position="1"/>
        <end position="24"/>
    </location>
</feature>
<feature type="chain" id="PRO_0000416107" description="Interferon alpha-inducible protein 27-like protein 2A">
    <location>
        <begin position="25"/>
        <end position="90"/>
    </location>
</feature>
<feature type="transmembrane region" description="Helical" evidence="2">
    <location>
        <begin position="28"/>
        <end position="48"/>
    </location>
</feature>
<feature type="transmembrane region" description="Helical" evidence="2">
    <location>
        <begin position="67"/>
        <end position="89"/>
    </location>
</feature>
<name>IF27A_MOUSE</name>
<reference key="1">
    <citation type="journal article" date="2002" name="J. Virol.">
        <title>Age-dependent resistance to lethal alphavirus encephalitis in mice: analysis of gene expression in the central nervous system and identification of a novel interferon-inducible protective gene, mouse ISG12.</title>
        <authorList>
            <person name="Labrada L."/>
            <person name="Liang X.H."/>
            <person name="Zheng W."/>
            <person name="Johnston C."/>
            <person name="Levine B."/>
        </authorList>
    </citation>
    <scope>NUCLEOTIDE SEQUENCE [MRNA]</scope>
    <source>
        <strain>BALB/cJ</strain>
    </source>
</reference>
<reference key="2">
    <citation type="journal article" date="2005" name="Science">
        <title>The transcriptional landscape of the mammalian genome.</title>
        <authorList>
            <person name="Carninci P."/>
            <person name="Kasukawa T."/>
            <person name="Katayama S."/>
            <person name="Gough J."/>
            <person name="Frith M.C."/>
            <person name="Maeda N."/>
            <person name="Oyama R."/>
            <person name="Ravasi T."/>
            <person name="Lenhard B."/>
            <person name="Wells C."/>
            <person name="Kodzius R."/>
            <person name="Shimokawa K."/>
            <person name="Bajic V.B."/>
            <person name="Brenner S.E."/>
            <person name="Batalov S."/>
            <person name="Forrest A.R."/>
            <person name="Zavolan M."/>
            <person name="Davis M.J."/>
            <person name="Wilming L.G."/>
            <person name="Aidinis V."/>
            <person name="Allen J.E."/>
            <person name="Ambesi-Impiombato A."/>
            <person name="Apweiler R."/>
            <person name="Aturaliya R.N."/>
            <person name="Bailey T.L."/>
            <person name="Bansal M."/>
            <person name="Baxter L."/>
            <person name="Beisel K.W."/>
            <person name="Bersano T."/>
            <person name="Bono H."/>
            <person name="Chalk A.M."/>
            <person name="Chiu K.P."/>
            <person name="Choudhary V."/>
            <person name="Christoffels A."/>
            <person name="Clutterbuck D.R."/>
            <person name="Crowe M.L."/>
            <person name="Dalla E."/>
            <person name="Dalrymple B.P."/>
            <person name="de Bono B."/>
            <person name="Della Gatta G."/>
            <person name="di Bernardo D."/>
            <person name="Down T."/>
            <person name="Engstrom P."/>
            <person name="Fagiolini M."/>
            <person name="Faulkner G."/>
            <person name="Fletcher C.F."/>
            <person name="Fukushima T."/>
            <person name="Furuno M."/>
            <person name="Futaki S."/>
            <person name="Gariboldi M."/>
            <person name="Georgii-Hemming P."/>
            <person name="Gingeras T.R."/>
            <person name="Gojobori T."/>
            <person name="Green R.E."/>
            <person name="Gustincich S."/>
            <person name="Harbers M."/>
            <person name="Hayashi Y."/>
            <person name="Hensch T.K."/>
            <person name="Hirokawa N."/>
            <person name="Hill D."/>
            <person name="Huminiecki L."/>
            <person name="Iacono M."/>
            <person name="Ikeo K."/>
            <person name="Iwama A."/>
            <person name="Ishikawa T."/>
            <person name="Jakt M."/>
            <person name="Kanapin A."/>
            <person name="Katoh M."/>
            <person name="Kawasawa Y."/>
            <person name="Kelso J."/>
            <person name="Kitamura H."/>
            <person name="Kitano H."/>
            <person name="Kollias G."/>
            <person name="Krishnan S.P."/>
            <person name="Kruger A."/>
            <person name="Kummerfeld S.K."/>
            <person name="Kurochkin I.V."/>
            <person name="Lareau L.F."/>
            <person name="Lazarevic D."/>
            <person name="Lipovich L."/>
            <person name="Liu J."/>
            <person name="Liuni S."/>
            <person name="McWilliam S."/>
            <person name="Madan Babu M."/>
            <person name="Madera M."/>
            <person name="Marchionni L."/>
            <person name="Matsuda H."/>
            <person name="Matsuzawa S."/>
            <person name="Miki H."/>
            <person name="Mignone F."/>
            <person name="Miyake S."/>
            <person name="Morris K."/>
            <person name="Mottagui-Tabar S."/>
            <person name="Mulder N."/>
            <person name="Nakano N."/>
            <person name="Nakauchi H."/>
            <person name="Ng P."/>
            <person name="Nilsson R."/>
            <person name="Nishiguchi S."/>
            <person name="Nishikawa S."/>
            <person name="Nori F."/>
            <person name="Ohara O."/>
            <person name="Okazaki Y."/>
            <person name="Orlando V."/>
            <person name="Pang K.C."/>
            <person name="Pavan W.J."/>
            <person name="Pavesi G."/>
            <person name="Pesole G."/>
            <person name="Petrovsky N."/>
            <person name="Piazza S."/>
            <person name="Reed J."/>
            <person name="Reid J.F."/>
            <person name="Ring B.Z."/>
            <person name="Ringwald M."/>
            <person name="Rost B."/>
            <person name="Ruan Y."/>
            <person name="Salzberg S.L."/>
            <person name="Sandelin A."/>
            <person name="Schneider C."/>
            <person name="Schoenbach C."/>
            <person name="Sekiguchi K."/>
            <person name="Semple C.A."/>
            <person name="Seno S."/>
            <person name="Sessa L."/>
            <person name="Sheng Y."/>
            <person name="Shibata Y."/>
            <person name="Shimada H."/>
            <person name="Shimada K."/>
            <person name="Silva D."/>
            <person name="Sinclair B."/>
            <person name="Sperling S."/>
            <person name="Stupka E."/>
            <person name="Sugiura K."/>
            <person name="Sultana R."/>
            <person name="Takenaka Y."/>
            <person name="Taki K."/>
            <person name="Tammoja K."/>
            <person name="Tan S.L."/>
            <person name="Tang S."/>
            <person name="Taylor M.S."/>
            <person name="Tegner J."/>
            <person name="Teichmann S.A."/>
            <person name="Ueda H.R."/>
            <person name="van Nimwegen E."/>
            <person name="Verardo R."/>
            <person name="Wei C.L."/>
            <person name="Yagi K."/>
            <person name="Yamanishi H."/>
            <person name="Zabarovsky E."/>
            <person name="Zhu S."/>
            <person name="Zimmer A."/>
            <person name="Hide W."/>
            <person name="Bult C."/>
            <person name="Grimmond S.M."/>
            <person name="Teasdale R.D."/>
            <person name="Liu E.T."/>
            <person name="Brusic V."/>
            <person name="Quackenbush J."/>
            <person name="Wahlestedt C."/>
            <person name="Mattick J.S."/>
            <person name="Hume D.A."/>
            <person name="Kai C."/>
            <person name="Sasaki D."/>
            <person name="Tomaru Y."/>
            <person name="Fukuda S."/>
            <person name="Kanamori-Katayama M."/>
            <person name="Suzuki M."/>
            <person name="Aoki J."/>
            <person name="Arakawa T."/>
            <person name="Iida J."/>
            <person name="Imamura K."/>
            <person name="Itoh M."/>
            <person name="Kato T."/>
            <person name="Kawaji H."/>
            <person name="Kawagashira N."/>
            <person name="Kawashima T."/>
            <person name="Kojima M."/>
            <person name="Kondo S."/>
            <person name="Konno H."/>
            <person name="Nakano K."/>
            <person name="Ninomiya N."/>
            <person name="Nishio T."/>
            <person name="Okada M."/>
            <person name="Plessy C."/>
            <person name="Shibata K."/>
            <person name="Shiraki T."/>
            <person name="Suzuki S."/>
            <person name="Tagami M."/>
            <person name="Waki K."/>
            <person name="Watahiki A."/>
            <person name="Okamura-Oho Y."/>
            <person name="Suzuki H."/>
            <person name="Kawai J."/>
            <person name="Hayashizaki Y."/>
        </authorList>
    </citation>
    <scope>NUCLEOTIDE SEQUENCE [LARGE SCALE MRNA]</scope>
    <source>
        <strain>C57BL/6J</strain>
        <tissue>Tongue</tissue>
    </source>
</reference>
<reference key="3">
    <citation type="journal article" date="2009" name="PLoS Biol.">
        <title>Lineage-specific biology revealed by a finished genome assembly of the mouse.</title>
        <authorList>
            <person name="Church D.M."/>
            <person name="Goodstadt L."/>
            <person name="Hillier L.W."/>
            <person name="Zody M.C."/>
            <person name="Goldstein S."/>
            <person name="She X."/>
            <person name="Bult C.J."/>
            <person name="Agarwala R."/>
            <person name="Cherry J.L."/>
            <person name="DiCuccio M."/>
            <person name="Hlavina W."/>
            <person name="Kapustin Y."/>
            <person name="Meric P."/>
            <person name="Maglott D."/>
            <person name="Birtle Z."/>
            <person name="Marques A.C."/>
            <person name="Graves T."/>
            <person name="Zhou S."/>
            <person name="Teague B."/>
            <person name="Potamousis K."/>
            <person name="Churas C."/>
            <person name="Place M."/>
            <person name="Herschleb J."/>
            <person name="Runnheim R."/>
            <person name="Forrest D."/>
            <person name="Amos-Landgraf J."/>
            <person name="Schwartz D.C."/>
            <person name="Cheng Z."/>
            <person name="Lindblad-Toh K."/>
            <person name="Eichler E.E."/>
            <person name="Ponting C.P."/>
        </authorList>
    </citation>
    <scope>NUCLEOTIDE SEQUENCE [LARGE SCALE GENOMIC DNA]</scope>
    <source>
        <strain>C57BL/6J</strain>
    </source>
</reference>
<reference key="4">
    <citation type="submission" date="2005-09" db="EMBL/GenBank/DDBJ databases">
        <authorList>
            <person name="Mural R.J."/>
            <person name="Adams M.D."/>
            <person name="Myers E.W."/>
            <person name="Smith H.O."/>
            <person name="Venter J.C."/>
        </authorList>
    </citation>
    <scope>NUCLEOTIDE SEQUENCE [LARGE SCALE GENOMIC DNA]</scope>
</reference>
<reference key="5">
    <citation type="journal article" date="2004" name="Genome Res.">
        <title>The status, quality, and expansion of the NIH full-length cDNA project: the Mammalian Gene Collection (MGC).</title>
        <authorList>
            <consortium name="The MGC Project Team"/>
        </authorList>
    </citation>
    <scope>NUCLEOTIDE SEQUENCE [LARGE SCALE MRNA]</scope>
    <source>
        <tissue>Heart</tissue>
    </source>
</reference>
<reference key="6">
    <citation type="journal article" date="2004" name="BMC Genomics">
        <title>Identification of a novel gene family that includes the interferon-inducible human genes 6-16 and ISG12.</title>
        <authorList>
            <person name="Parker N."/>
            <person name="Porter A.C.G."/>
        </authorList>
    </citation>
    <scope>IDENTIFICATION</scope>
</reference>
<reference key="7">
    <citation type="journal article" date="2012" name="Circ. Res.">
        <title>The interferon stimulated gene 12 inactivates vasculoprotective functions of NR4A nuclear receptors.</title>
        <authorList>
            <person name="Papac-Milicevic N."/>
            <person name="Breuss J.M."/>
            <person name="Zaujec J."/>
            <person name="Ryban L."/>
            <person name="Plyushch T."/>
            <person name="Wagner G.A."/>
            <person name="Fenzl S."/>
            <person name="Dremsek P."/>
            <person name="Cabaravdic M."/>
            <person name="Steiner M."/>
            <person name="Glass C.K."/>
            <person name="Binder C.J."/>
            <person name="Uhrin P."/>
            <person name="Binder B.R."/>
        </authorList>
    </citation>
    <scope>FUNCTION</scope>
    <scope>SUBCELLULAR LOCATION</scope>
    <scope>INDUCTION</scope>
    <scope>DISRUPTION PHENOTYPE</scope>
</reference>
<sequence>MLGTLFGSAIGGALAVAGAPVALAAMGFTGTGIAAASIAAKMMSAAAIANGGGVAAGSLVATLQSAGVLGLSTSTNAILGAAGAAVGALL</sequence>
<organism>
    <name type="scientific">Mus musculus</name>
    <name type="common">Mouse</name>
    <dbReference type="NCBI Taxonomy" id="10090"/>
    <lineage>
        <taxon>Eukaryota</taxon>
        <taxon>Metazoa</taxon>
        <taxon>Chordata</taxon>
        <taxon>Craniata</taxon>
        <taxon>Vertebrata</taxon>
        <taxon>Euteleostomi</taxon>
        <taxon>Mammalia</taxon>
        <taxon>Eutheria</taxon>
        <taxon>Euarchontoglires</taxon>
        <taxon>Glires</taxon>
        <taxon>Rodentia</taxon>
        <taxon>Myomorpha</taxon>
        <taxon>Muroidea</taxon>
        <taxon>Muridae</taxon>
        <taxon>Murinae</taxon>
        <taxon>Mus</taxon>
        <taxon>Mus</taxon>
    </lineage>
</organism>
<gene>
    <name evidence="7" type="primary">Ifi27l2a</name>
    <name type="synonym">Ifi27</name>
    <name evidence="4" type="synonym">Isg12</name>
</gene>
<keyword id="KW-0472">Membrane</keyword>
<keyword id="KW-0539">Nucleus</keyword>
<keyword id="KW-1185">Reference proteome</keyword>
<keyword id="KW-0732">Signal</keyword>
<keyword id="KW-0804">Transcription</keyword>
<keyword id="KW-0805">Transcription regulation</keyword>
<keyword id="KW-0812">Transmembrane</keyword>
<keyword id="KW-1133">Transmembrane helix</keyword>
<comment type="function">
    <text evidence="3">May be involved in the interferon-induced negative regulation of the transcriptional activity of NR4A1, NR4A2 and NR4A3 through the enhancement of XPO1-mediated nuclear export of these nuclear receptors (PubMed:22427340). Through the regulation of NR4A1 transcriptional activity, may play a role in the vascular response to injury (PubMed:22427340).</text>
</comment>
<comment type="subunit">
    <text evidence="1">Homodimer (By similarity). Interacts with SKP2 (By similarity). Interacts with NR4A1 (By similarity). May interact with BCL2 (By similarity).</text>
</comment>
<comment type="subcellular location">
    <subcellularLocation>
        <location evidence="6">Nucleus inner membrane</location>
        <topology evidence="2">Multi-pass membrane protein</topology>
    </subcellularLocation>
</comment>
<comment type="induction">
    <text evidence="3">Up-regulated by interferon (PubMed:22427340). Up-regulated by vascular tissues injury (PubMed:22427340).</text>
</comment>
<comment type="disruption phenotype">
    <text evidence="3">Homozygous knockout mice exhibit no obvious phenotype, having normal growth rates, survival, fertility and litter sizes (PubMed:22427340). No organ pathology is detected (PubMed:22427340). However, they display decreased restenosis, the narrowing of blood vessels, upon vascular injury (PubMed:22427340).</text>
</comment>
<comment type="similarity">
    <text evidence="5">Belongs to the IFI6/IFI27 family.</text>
</comment>
<protein>
    <recommendedName>
        <fullName evidence="5">Interferon alpha-inducible protein 27-like protein 2A</fullName>
    </recommendedName>
    <alternativeName>
        <fullName evidence="4">Interferon-stimulated gene 12 protein</fullName>
        <shortName evidence="4">ISG12</shortName>
    </alternativeName>
</protein>
<evidence type="ECO:0000250" key="1">
    <source>
        <dbReference type="UniProtKB" id="P40305"/>
    </source>
</evidence>
<evidence type="ECO:0000255" key="2"/>
<evidence type="ECO:0000269" key="3">
    <source>
    </source>
</evidence>
<evidence type="ECO:0000303" key="4">
    <source>
    </source>
</evidence>
<evidence type="ECO:0000305" key="5"/>
<evidence type="ECO:0000305" key="6">
    <source>
    </source>
</evidence>
<evidence type="ECO:0000312" key="7">
    <source>
        <dbReference type="MGI" id="MGI:1924183"/>
    </source>
</evidence>
<accession>Q8R412</accession>
<dbReference type="EMBL" id="AK160503">
    <property type="protein sequence ID" value="BAE35827.1"/>
    <property type="molecule type" value="mRNA"/>
</dbReference>
<dbReference type="EMBL" id="AC154347">
    <property type="status" value="NOT_ANNOTATED_CDS"/>
    <property type="molecule type" value="Genomic_DNA"/>
</dbReference>
<dbReference type="EMBL" id="CH466549">
    <property type="protein sequence ID" value="EDL18827.1"/>
    <property type="molecule type" value="Genomic_DNA"/>
</dbReference>
<dbReference type="EMBL" id="BC100588">
    <property type="protein sequence ID" value="AAI00589.1"/>
    <property type="molecule type" value="mRNA"/>
</dbReference>
<dbReference type="EMBL" id="AY090098">
    <property type="protein sequence ID" value="AAM10443.1"/>
    <property type="molecule type" value="mRNA"/>
</dbReference>
<dbReference type="EMBL" id="BN000231">
    <property type="protein sequence ID" value="CAE00398.1"/>
    <property type="molecule type" value="mRNA"/>
</dbReference>
<dbReference type="CCDS" id="CCDS49153.1"/>
<dbReference type="RefSeq" id="NP_084079.1">
    <property type="nucleotide sequence ID" value="NM_029803.3"/>
</dbReference>
<dbReference type="FunCoup" id="Q8R412">
    <property type="interactions" value="197"/>
</dbReference>
<dbReference type="STRING" id="10090.ENSMUSP00000054698"/>
<dbReference type="PhosphoSitePlus" id="Q8R412"/>
<dbReference type="PaxDb" id="10090-ENSMUSP00000054698"/>
<dbReference type="DNASU" id="76933"/>
<dbReference type="Ensembl" id="ENSMUST00000055071.9">
    <property type="protein sequence ID" value="ENSMUSP00000054698.9"/>
    <property type="gene ID" value="ENSMUSG00000079017.4"/>
</dbReference>
<dbReference type="GeneID" id="76933"/>
<dbReference type="KEGG" id="mmu:76933"/>
<dbReference type="UCSC" id="uc007ovn.3">
    <property type="organism name" value="mouse"/>
</dbReference>
<dbReference type="AGR" id="MGI:1924183"/>
<dbReference type="CTD" id="76933"/>
<dbReference type="MGI" id="MGI:1924183">
    <property type="gene designation" value="Ifi27l2a"/>
</dbReference>
<dbReference type="VEuPathDB" id="HostDB:ENSMUSG00000079017"/>
<dbReference type="GeneTree" id="ENSGT00940000155018"/>
<dbReference type="HOGENOM" id="CLU_142338_3_0_1"/>
<dbReference type="InParanoid" id="Q8R412"/>
<dbReference type="OMA" id="AAGMACK"/>
<dbReference type="TreeFam" id="TF340510"/>
<dbReference type="BioGRID-ORCS" id="76933">
    <property type="hits" value="2 hits in 76 CRISPR screens"/>
</dbReference>
<dbReference type="PRO" id="PR:Q8R412"/>
<dbReference type="Proteomes" id="UP000000589">
    <property type="component" value="Chromosome 12"/>
</dbReference>
<dbReference type="RNAct" id="Q8R412">
    <property type="molecule type" value="protein"/>
</dbReference>
<dbReference type="Bgee" id="ENSMUSG00000079017">
    <property type="expression patterns" value="Expressed in aorta tunica adventitia and 167 other cell types or tissues"/>
</dbReference>
<dbReference type="GO" id="GO:0005637">
    <property type="term" value="C:nuclear inner membrane"/>
    <property type="evidence" value="ECO:0007669"/>
    <property type="project" value="UniProtKB-SubCell"/>
</dbReference>
<dbReference type="GO" id="GO:0009615">
    <property type="term" value="P:response to virus"/>
    <property type="evidence" value="ECO:0000314"/>
    <property type="project" value="MGI"/>
</dbReference>
<dbReference type="Gene3D" id="6.10.110.10">
    <property type="match status" value="1"/>
</dbReference>
<dbReference type="InterPro" id="IPR009311">
    <property type="entry name" value="IFI6/IFI27-like"/>
</dbReference>
<dbReference type="InterPro" id="IPR038213">
    <property type="entry name" value="IFI6/IFI27-like_sf"/>
</dbReference>
<dbReference type="PANTHER" id="PTHR16932">
    <property type="entry name" value="INTERFERON ALPHA-INDUCIBLE PROTEIN 27"/>
    <property type="match status" value="1"/>
</dbReference>
<dbReference type="PANTHER" id="PTHR16932:SF2">
    <property type="entry name" value="INTERFERON ALPHA-INDUCIBLE PROTEIN 27, MITOCHONDRIAL"/>
    <property type="match status" value="1"/>
</dbReference>
<dbReference type="Pfam" id="PF06140">
    <property type="entry name" value="Ifi-6-16"/>
    <property type="match status" value="1"/>
</dbReference>
<proteinExistence type="evidence at transcript level"/>